<dbReference type="EC" id="1.1.1.38" evidence="1"/>
<dbReference type="EMBL" id="AE004091">
    <property type="protein sequence ID" value="AAG06859.1"/>
    <property type="molecule type" value="Genomic_DNA"/>
</dbReference>
<dbReference type="PIR" id="D83211">
    <property type="entry name" value="D83211"/>
</dbReference>
<dbReference type="RefSeq" id="NP_252161.1">
    <property type="nucleotide sequence ID" value="NC_002516.2"/>
</dbReference>
<dbReference type="RefSeq" id="WP_003103761.1">
    <property type="nucleotide sequence ID" value="NZ_QZGE01000039.1"/>
</dbReference>
<dbReference type="SMR" id="Q9HYD5"/>
<dbReference type="FunCoup" id="Q9HYD5">
    <property type="interactions" value="590"/>
</dbReference>
<dbReference type="STRING" id="208964.PA3471"/>
<dbReference type="PaxDb" id="208964-PA3471"/>
<dbReference type="GeneID" id="879925"/>
<dbReference type="KEGG" id="pae:PA3471"/>
<dbReference type="PATRIC" id="fig|208964.12.peg.3633"/>
<dbReference type="PseudoCAP" id="PA3471"/>
<dbReference type="HOGENOM" id="CLU_011405_5_2_6"/>
<dbReference type="InParanoid" id="Q9HYD5"/>
<dbReference type="OrthoDB" id="3314528at2"/>
<dbReference type="PhylomeDB" id="Q9HYD5"/>
<dbReference type="BioCyc" id="PAER208964:G1FZ6-3539-MONOMER"/>
<dbReference type="Proteomes" id="UP000002438">
    <property type="component" value="Chromosome"/>
</dbReference>
<dbReference type="GO" id="GO:0005829">
    <property type="term" value="C:cytosol"/>
    <property type="evidence" value="ECO:0000318"/>
    <property type="project" value="GO_Central"/>
</dbReference>
<dbReference type="GO" id="GO:0004471">
    <property type="term" value="F:malate dehydrogenase (decarboxylating) (NAD+) activity"/>
    <property type="evidence" value="ECO:0007669"/>
    <property type="project" value="UniProtKB-UniRule"/>
</dbReference>
<dbReference type="GO" id="GO:0004470">
    <property type="term" value="F:malic enzyme activity"/>
    <property type="evidence" value="ECO:0000318"/>
    <property type="project" value="GO_Central"/>
</dbReference>
<dbReference type="GO" id="GO:0046872">
    <property type="term" value="F:metal ion binding"/>
    <property type="evidence" value="ECO:0007669"/>
    <property type="project" value="UniProtKB-KW"/>
</dbReference>
<dbReference type="GO" id="GO:0051287">
    <property type="term" value="F:NAD binding"/>
    <property type="evidence" value="ECO:0007669"/>
    <property type="project" value="InterPro"/>
</dbReference>
<dbReference type="GO" id="GO:0008948">
    <property type="term" value="F:oxaloacetate decarboxylase activity"/>
    <property type="evidence" value="ECO:0007669"/>
    <property type="project" value="UniProtKB-UniRule"/>
</dbReference>
<dbReference type="GO" id="GO:0006108">
    <property type="term" value="P:malate metabolic process"/>
    <property type="evidence" value="ECO:0000318"/>
    <property type="project" value="GO_Central"/>
</dbReference>
<dbReference type="GO" id="GO:0006090">
    <property type="term" value="P:pyruvate metabolic process"/>
    <property type="evidence" value="ECO:0000318"/>
    <property type="project" value="GO_Central"/>
</dbReference>
<dbReference type="FunFam" id="3.40.50.10380:FF:000001">
    <property type="entry name" value="NAD-dependent malic enzyme"/>
    <property type="match status" value="1"/>
</dbReference>
<dbReference type="FunFam" id="3.40.50.720:FF:000055">
    <property type="entry name" value="NAD-dependent malic enzyme"/>
    <property type="match status" value="1"/>
</dbReference>
<dbReference type="Gene3D" id="3.40.50.10380">
    <property type="entry name" value="Malic enzyme, N-terminal domain"/>
    <property type="match status" value="1"/>
</dbReference>
<dbReference type="Gene3D" id="3.40.50.720">
    <property type="entry name" value="NAD(P)-binding Rossmann-like Domain"/>
    <property type="match status" value="1"/>
</dbReference>
<dbReference type="HAMAP" id="MF_01619">
    <property type="entry name" value="NAD_malic_enz"/>
    <property type="match status" value="1"/>
</dbReference>
<dbReference type="InterPro" id="IPR046346">
    <property type="entry name" value="Aminoacid_DH-like_N_sf"/>
</dbReference>
<dbReference type="InterPro" id="IPR015884">
    <property type="entry name" value="Malic_enzyme_CS"/>
</dbReference>
<dbReference type="InterPro" id="IPR012301">
    <property type="entry name" value="Malic_N_dom"/>
</dbReference>
<dbReference type="InterPro" id="IPR037062">
    <property type="entry name" value="Malic_N_dom_sf"/>
</dbReference>
<dbReference type="InterPro" id="IPR012302">
    <property type="entry name" value="Malic_NAD-bd"/>
</dbReference>
<dbReference type="InterPro" id="IPR001891">
    <property type="entry name" value="Malic_OxRdtase"/>
</dbReference>
<dbReference type="InterPro" id="IPR036291">
    <property type="entry name" value="NAD(P)-bd_dom_sf"/>
</dbReference>
<dbReference type="InterPro" id="IPR023667">
    <property type="entry name" value="NAD_malic_enz_proteobac"/>
</dbReference>
<dbReference type="NCBIfam" id="NF010052">
    <property type="entry name" value="PRK13529.1"/>
    <property type="match status" value="1"/>
</dbReference>
<dbReference type="PANTHER" id="PTHR23406">
    <property type="entry name" value="MALIC ENZYME-RELATED"/>
    <property type="match status" value="1"/>
</dbReference>
<dbReference type="PANTHER" id="PTHR23406:SF34">
    <property type="entry name" value="NAD-DEPENDENT MALIC ENZYME, MITOCHONDRIAL"/>
    <property type="match status" value="1"/>
</dbReference>
<dbReference type="Pfam" id="PF00390">
    <property type="entry name" value="malic"/>
    <property type="match status" value="1"/>
</dbReference>
<dbReference type="Pfam" id="PF03949">
    <property type="entry name" value="Malic_M"/>
    <property type="match status" value="1"/>
</dbReference>
<dbReference type="PIRSF" id="PIRSF000106">
    <property type="entry name" value="ME"/>
    <property type="match status" value="1"/>
</dbReference>
<dbReference type="PRINTS" id="PR00072">
    <property type="entry name" value="MALOXRDTASE"/>
</dbReference>
<dbReference type="SMART" id="SM01274">
    <property type="entry name" value="malic"/>
    <property type="match status" value="1"/>
</dbReference>
<dbReference type="SMART" id="SM00919">
    <property type="entry name" value="Malic_M"/>
    <property type="match status" value="1"/>
</dbReference>
<dbReference type="SUPFAM" id="SSF53223">
    <property type="entry name" value="Aminoacid dehydrogenase-like, N-terminal domain"/>
    <property type="match status" value="1"/>
</dbReference>
<dbReference type="SUPFAM" id="SSF51735">
    <property type="entry name" value="NAD(P)-binding Rossmann-fold domains"/>
    <property type="match status" value="1"/>
</dbReference>
<dbReference type="PROSITE" id="PS00331">
    <property type="entry name" value="MALIC_ENZYMES"/>
    <property type="match status" value="1"/>
</dbReference>
<feature type="chain" id="PRO_0000160224" description="NAD-dependent malic enzyme">
    <location>
        <begin position="1"/>
        <end position="564"/>
    </location>
</feature>
<feature type="active site" description="Proton donor" evidence="1">
    <location>
        <position position="102"/>
    </location>
</feature>
<feature type="active site" description="Proton acceptor" evidence="1">
    <location>
        <position position="173"/>
    </location>
</feature>
<feature type="binding site" evidence="1">
    <location>
        <position position="155"/>
    </location>
    <ligand>
        <name>NAD(+)</name>
        <dbReference type="ChEBI" id="CHEBI:57540"/>
    </ligand>
</feature>
<feature type="binding site" evidence="1">
    <location>
        <position position="244"/>
    </location>
    <ligand>
        <name>a divalent metal cation</name>
        <dbReference type="ChEBI" id="CHEBI:60240"/>
    </ligand>
</feature>
<feature type="binding site" evidence="1">
    <location>
        <position position="245"/>
    </location>
    <ligand>
        <name>a divalent metal cation</name>
        <dbReference type="ChEBI" id="CHEBI:60240"/>
    </ligand>
</feature>
<feature type="binding site" evidence="1">
    <location>
        <position position="268"/>
    </location>
    <ligand>
        <name>a divalent metal cation</name>
        <dbReference type="ChEBI" id="CHEBI:60240"/>
    </ligand>
</feature>
<feature type="binding site" evidence="1">
    <location>
        <position position="268"/>
    </location>
    <ligand>
        <name>NAD(+)</name>
        <dbReference type="ChEBI" id="CHEBI:57540"/>
    </ligand>
</feature>
<feature type="binding site" evidence="1">
    <location>
        <position position="417"/>
    </location>
    <ligand>
        <name>NAD(+)</name>
        <dbReference type="ChEBI" id="CHEBI:57540"/>
    </ligand>
</feature>
<feature type="site" description="Important for activity" evidence="1">
    <location>
        <position position="268"/>
    </location>
</feature>
<protein>
    <recommendedName>
        <fullName evidence="1">NAD-dependent malic enzyme</fullName>
        <shortName evidence="1">NAD-ME</shortName>
        <ecNumber evidence="1">1.1.1.38</ecNumber>
    </recommendedName>
</protein>
<evidence type="ECO:0000255" key="1">
    <source>
        <dbReference type="HAMAP-Rule" id="MF_01619"/>
    </source>
</evidence>
<keyword id="KW-0479">Metal-binding</keyword>
<keyword id="KW-0520">NAD</keyword>
<keyword id="KW-0560">Oxidoreductase</keyword>
<keyword id="KW-1185">Reference proteome</keyword>
<proteinExistence type="inferred from homology"/>
<name>MAO1_PSEAE</name>
<gene>
    <name evidence="1" type="primary">maeA</name>
    <name type="ordered locus">PA3471</name>
</gene>
<reference key="1">
    <citation type="journal article" date="2000" name="Nature">
        <title>Complete genome sequence of Pseudomonas aeruginosa PAO1, an opportunistic pathogen.</title>
        <authorList>
            <person name="Stover C.K."/>
            <person name="Pham X.-Q.T."/>
            <person name="Erwin A.L."/>
            <person name="Mizoguchi S.D."/>
            <person name="Warrener P."/>
            <person name="Hickey M.J."/>
            <person name="Brinkman F.S.L."/>
            <person name="Hufnagle W.O."/>
            <person name="Kowalik D.J."/>
            <person name="Lagrou M."/>
            <person name="Garber R.L."/>
            <person name="Goltry L."/>
            <person name="Tolentino E."/>
            <person name="Westbrock-Wadman S."/>
            <person name="Yuan Y."/>
            <person name="Brody L.L."/>
            <person name="Coulter S.N."/>
            <person name="Folger K.R."/>
            <person name="Kas A."/>
            <person name="Larbig K."/>
            <person name="Lim R.M."/>
            <person name="Smith K.A."/>
            <person name="Spencer D.H."/>
            <person name="Wong G.K.-S."/>
            <person name="Wu Z."/>
            <person name="Paulsen I.T."/>
            <person name="Reizer J."/>
            <person name="Saier M.H. Jr."/>
            <person name="Hancock R.E.W."/>
            <person name="Lory S."/>
            <person name="Olson M.V."/>
        </authorList>
    </citation>
    <scope>NUCLEOTIDE SEQUENCE [LARGE SCALE GENOMIC DNA]</scope>
    <source>
        <strain>ATCC 15692 / DSM 22644 / CIP 104116 / JCM 14847 / LMG 12228 / 1C / PRS 101 / PAO1</strain>
    </source>
</reference>
<sequence>MTETAKRPLYVPHAGPSLLEMPLLNKGSAFSTQERIDFNLQGLLPHNIETIEEQTERAYSQYNLCNTDLDRHIFLRSIQDNNETLFFRLLEEHLEEMMPIIYTPTVGQACQEFSKIYRTHRGLFISYPDRERIDDILRSATKNNVKIVVVTDSERILGLGDQGIGGMGIPIGKLSLYTACGGISPAYTLPVVLDVGTNNPDLLNDPMYMGWRHERVSGAQYEEFVDLFIQAIKRRWPNVLLQFEDFAQTNAMPLLERYKDELCCFNDDIQGTAAVAVGTLLAACKAKGEKLSEQTVTFVGAGSAGCGIAEQIIAAMQLEGLDEAQARRRIFMVDRWGLLTDDMSNLLDFQHRLAQKRADLGAWGGQQGDDLALLEVIRNARPTVLIGVSGQRGLFSEEVIRELHSHCKQPLVMPLSNPTSRVEATPQEILNWTDGQALVATGSPFQPVQVGDKRIPIAQCNNAYIFPGIGLGVIAARANRVTEGMLMAAANALANCSPIVTQGEGAVLPALGDIREVSKRIAVAVAKQAQAEGKALHTSDEVLNDAIEANFWFPRYRAYRRTSF</sequence>
<accession>Q9HYD5</accession>
<comment type="catalytic activity">
    <reaction evidence="1">
        <text>(S)-malate + NAD(+) = pyruvate + CO2 + NADH</text>
        <dbReference type="Rhea" id="RHEA:12653"/>
        <dbReference type="ChEBI" id="CHEBI:15361"/>
        <dbReference type="ChEBI" id="CHEBI:15589"/>
        <dbReference type="ChEBI" id="CHEBI:16526"/>
        <dbReference type="ChEBI" id="CHEBI:57540"/>
        <dbReference type="ChEBI" id="CHEBI:57945"/>
        <dbReference type="EC" id="1.1.1.38"/>
    </reaction>
</comment>
<comment type="catalytic activity">
    <reaction evidence="1">
        <text>oxaloacetate + H(+) = pyruvate + CO2</text>
        <dbReference type="Rhea" id="RHEA:15641"/>
        <dbReference type="ChEBI" id="CHEBI:15361"/>
        <dbReference type="ChEBI" id="CHEBI:15378"/>
        <dbReference type="ChEBI" id="CHEBI:16452"/>
        <dbReference type="ChEBI" id="CHEBI:16526"/>
        <dbReference type="EC" id="1.1.1.38"/>
    </reaction>
</comment>
<comment type="cofactor">
    <cofactor evidence="1">
        <name>Mg(2+)</name>
        <dbReference type="ChEBI" id="CHEBI:18420"/>
    </cofactor>
    <cofactor evidence="1">
        <name>Mn(2+)</name>
        <dbReference type="ChEBI" id="CHEBI:29035"/>
    </cofactor>
    <text evidence="1">Divalent metal cations. Prefers magnesium or manganese.</text>
</comment>
<comment type="subunit">
    <text evidence="1">Homotetramer.</text>
</comment>
<comment type="similarity">
    <text evidence="1">Belongs to the malic enzymes family.</text>
</comment>
<organism>
    <name type="scientific">Pseudomonas aeruginosa (strain ATCC 15692 / DSM 22644 / CIP 104116 / JCM 14847 / LMG 12228 / 1C / PRS 101 / PAO1)</name>
    <dbReference type="NCBI Taxonomy" id="208964"/>
    <lineage>
        <taxon>Bacteria</taxon>
        <taxon>Pseudomonadati</taxon>
        <taxon>Pseudomonadota</taxon>
        <taxon>Gammaproteobacteria</taxon>
        <taxon>Pseudomonadales</taxon>
        <taxon>Pseudomonadaceae</taxon>
        <taxon>Pseudomonas</taxon>
    </lineage>
</organism>